<feature type="chain" id="PRO_1000184685" description="ATP synthase subunit delta">
    <location>
        <begin position="1"/>
        <end position="185"/>
    </location>
</feature>
<organism>
    <name type="scientific">Coxiella burnetii (strain RSA 331 / Henzerling II)</name>
    <dbReference type="NCBI Taxonomy" id="360115"/>
    <lineage>
        <taxon>Bacteria</taxon>
        <taxon>Pseudomonadati</taxon>
        <taxon>Pseudomonadota</taxon>
        <taxon>Gammaproteobacteria</taxon>
        <taxon>Legionellales</taxon>
        <taxon>Coxiellaceae</taxon>
        <taxon>Coxiella</taxon>
    </lineage>
</organism>
<sequence length="185" mass="21189">MALHLTLARPYAKAAFADGQKANQLEAWLAVFTAFSKIIKNKEVARQIINPKFSDKEIKTLLFDLIQTIEPESTKQLKDKIDHFLQLLIDEKRLMILPDIALVYQQLLNKYQGIIEASVTYVFPLNDEHRQQIQKQLEKRFNAEVKLKMIKDESLLGGVIIRAGNWVMDGSIKGKLTRLAENLKG</sequence>
<dbReference type="EMBL" id="CP000890">
    <property type="protein sequence ID" value="ABX77367.1"/>
    <property type="molecule type" value="Genomic_DNA"/>
</dbReference>
<dbReference type="RefSeq" id="WP_010958555.1">
    <property type="nucleotide sequence ID" value="NC_010117.1"/>
</dbReference>
<dbReference type="SMR" id="A9NBC7"/>
<dbReference type="KEGG" id="cbs:COXBURSA331_A2145"/>
<dbReference type="HOGENOM" id="CLU_085114_3_0_6"/>
<dbReference type="GO" id="GO:0005886">
    <property type="term" value="C:plasma membrane"/>
    <property type="evidence" value="ECO:0007669"/>
    <property type="project" value="UniProtKB-SubCell"/>
</dbReference>
<dbReference type="GO" id="GO:0045259">
    <property type="term" value="C:proton-transporting ATP synthase complex"/>
    <property type="evidence" value="ECO:0007669"/>
    <property type="project" value="UniProtKB-KW"/>
</dbReference>
<dbReference type="GO" id="GO:0046933">
    <property type="term" value="F:proton-transporting ATP synthase activity, rotational mechanism"/>
    <property type="evidence" value="ECO:0007669"/>
    <property type="project" value="UniProtKB-UniRule"/>
</dbReference>
<dbReference type="Gene3D" id="1.10.520.20">
    <property type="entry name" value="N-terminal domain of the delta subunit of the F1F0-ATP synthase"/>
    <property type="match status" value="1"/>
</dbReference>
<dbReference type="HAMAP" id="MF_01416">
    <property type="entry name" value="ATP_synth_delta_bact"/>
    <property type="match status" value="1"/>
</dbReference>
<dbReference type="InterPro" id="IPR026015">
    <property type="entry name" value="ATP_synth_OSCP/delta_N_sf"/>
</dbReference>
<dbReference type="InterPro" id="IPR000711">
    <property type="entry name" value="ATPase_OSCP/dsu"/>
</dbReference>
<dbReference type="NCBIfam" id="TIGR01145">
    <property type="entry name" value="ATP_synt_delta"/>
    <property type="match status" value="1"/>
</dbReference>
<dbReference type="NCBIfam" id="NF004402">
    <property type="entry name" value="PRK05758.2-2"/>
    <property type="match status" value="1"/>
</dbReference>
<dbReference type="PANTHER" id="PTHR11910">
    <property type="entry name" value="ATP SYNTHASE DELTA CHAIN"/>
    <property type="match status" value="1"/>
</dbReference>
<dbReference type="Pfam" id="PF00213">
    <property type="entry name" value="OSCP"/>
    <property type="match status" value="1"/>
</dbReference>
<dbReference type="PRINTS" id="PR00125">
    <property type="entry name" value="ATPASEDELTA"/>
</dbReference>
<dbReference type="SUPFAM" id="SSF47928">
    <property type="entry name" value="N-terminal domain of the delta subunit of the F1F0-ATP synthase"/>
    <property type="match status" value="1"/>
</dbReference>
<name>ATPD_COXBR</name>
<reference key="1">
    <citation type="submission" date="2007-11" db="EMBL/GenBank/DDBJ databases">
        <title>Genome sequencing of phylogenetically and phenotypically diverse Coxiella burnetii isolates.</title>
        <authorList>
            <person name="Seshadri R."/>
            <person name="Samuel J.E."/>
        </authorList>
    </citation>
    <scope>NUCLEOTIDE SEQUENCE [LARGE SCALE GENOMIC DNA]</scope>
    <source>
        <strain>RSA 331 / Henzerling II</strain>
    </source>
</reference>
<comment type="function">
    <text evidence="1">F(1)F(0) ATP synthase produces ATP from ADP in the presence of a proton or sodium gradient. F-type ATPases consist of two structural domains, F(1) containing the extramembraneous catalytic core and F(0) containing the membrane proton channel, linked together by a central stalk and a peripheral stalk. During catalysis, ATP synthesis in the catalytic domain of F(1) is coupled via a rotary mechanism of the central stalk subunits to proton translocation.</text>
</comment>
<comment type="function">
    <text evidence="1">This protein is part of the stalk that links CF(0) to CF(1). It either transmits conformational changes from CF(0) to CF(1) or is implicated in proton conduction.</text>
</comment>
<comment type="subunit">
    <text evidence="1">F-type ATPases have 2 components, F(1) - the catalytic core - and F(0) - the membrane proton channel. F(1) has five subunits: alpha(3), beta(3), gamma(1), delta(1), epsilon(1). F(0) has three main subunits: a(1), b(2) and c(10-14). The alpha and beta chains form an alternating ring which encloses part of the gamma chain. F(1) is attached to F(0) by a central stalk formed by the gamma and epsilon chains, while a peripheral stalk is formed by the delta and b chains.</text>
</comment>
<comment type="subcellular location">
    <subcellularLocation>
        <location evidence="1">Cell inner membrane</location>
        <topology evidence="1">Peripheral membrane protein</topology>
    </subcellularLocation>
</comment>
<comment type="similarity">
    <text evidence="1">Belongs to the ATPase delta chain family.</text>
</comment>
<evidence type="ECO:0000255" key="1">
    <source>
        <dbReference type="HAMAP-Rule" id="MF_01416"/>
    </source>
</evidence>
<accession>A9NBC7</accession>
<proteinExistence type="inferred from homology"/>
<gene>
    <name evidence="1" type="primary">atpH</name>
    <name type="ordered locus">COXBURSA331_A2145</name>
</gene>
<keyword id="KW-0066">ATP synthesis</keyword>
<keyword id="KW-0997">Cell inner membrane</keyword>
<keyword id="KW-1003">Cell membrane</keyword>
<keyword id="KW-0139">CF(1)</keyword>
<keyword id="KW-0375">Hydrogen ion transport</keyword>
<keyword id="KW-0406">Ion transport</keyword>
<keyword id="KW-0472">Membrane</keyword>
<keyword id="KW-0813">Transport</keyword>
<protein>
    <recommendedName>
        <fullName evidence="1">ATP synthase subunit delta</fullName>
    </recommendedName>
    <alternativeName>
        <fullName evidence="1">ATP synthase F(1) sector subunit delta</fullName>
    </alternativeName>
    <alternativeName>
        <fullName evidence="1">F-type ATPase subunit delta</fullName>
        <shortName evidence="1">F-ATPase subunit delta</shortName>
    </alternativeName>
</protein>